<sequence>MKNYLSIGVIALLFALTFGTVKSVQAIAGYGWLPDRPPINNSQLVVSMAGIVEGTDKKVFINFFEIDLTSQPAHGGKTEQGLSPKSKPFATDNGAMPHKLEKADLLKAIQKQLIANVHSNDGYFEVIDFASDATITDRNGKVYFADKDGSVTLPTQPVQEFLLKGHVRVRPYKEKPVQNQAKSVDVEYTVQFTPLNPDDDFRPGLKDTKLLKTLAIGDTITSQELLAQAQSILNKTHPGYTIYERDSSIVTHDNDIFRTILPMDQEFTYHVKNREQAYEINPKTGIKEKTNNTDLVSEKYYVLKQGEKPYDPFDRSHLKLFTIKYVDVNTNELLKSEQLLTASERNLDFRDLYDPRDKAKLLYNNLDAFDIMDYTLTGKVEDNHDKNNRVVTVYMGKRPKGAKGSYHLAYDKDLYTEEERKAYSYLRDTGTPIPDNPKDK</sequence>
<comment type="function">
    <text>This protein is not a protease, but it activates plasminogen by complexing with it. As a potential virulence factor, it is thought to prevent the formation of effective fibrin barriers around the site of infection, thereby contributing to the invasiveness of the cells.</text>
</comment>
<organism>
    <name type="scientific">Streptococcus pyogenes serotype M1</name>
    <dbReference type="NCBI Taxonomy" id="301447"/>
    <lineage>
        <taxon>Bacteria</taxon>
        <taxon>Bacillati</taxon>
        <taxon>Bacillota</taxon>
        <taxon>Bacilli</taxon>
        <taxon>Lactobacillales</taxon>
        <taxon>Streptococcaceae</taxon>
        <taxon>Streptococcus</taxon>
    </lineage>
</organism>
<keyword id="KW-0617">Plasminogen activation</keyword>
<keyword id="KW-1185">Reference proteome</keyword>
<keyword id="KW-0732">Signal</keyword>
<keyword id="KW-0843">Virulence</keyword>
<gene>
    <name type="primary">ska</name>
    <name type="ordered locus">SPy_1979</name>
    <name type="ordered locus">M5005_Spy1684</name>
</gene>
<name>STRP_STRP1</name>
<evidence type="ECO:0000305" key="1"/>
<accession>P10520</accession>
<accession>Q48WH3</accession>
<protein>
    <recommendedName>
        <fullName>Streptokinase A</fullName>
    </recommendedName>
</protein>
<proteinExistence type="predicted"/>
<dbReference type="EMBL" id="X13399">
    <property type="protein sequence ID" value="CAA31765.1"/>
    <property type="molecule type" value="Genomic_DNA"/>
</dbReference>
<dbReference type="EMBL" id="AE004092">
    <property type="protein sequence ID" value="AAK34665.1"/>
    <property type="molecule type" value="Genomic_DNA"/>
</dbReference>
<dbReference type="EMBL" id="CP000017">
    <property type="protein sequence ID" value="AAZ52302.1"/>
    <property type="molecule type" value="Genomic_DNA"/>
</dbReference>
<dbReference type="PIR" id="S02724">
    <property type="entry name" value="S02724"/>
</dbReference>
<dbReference type="RefSeq" id="NP_269944.1">
    <property type="nucleotide sequence ID" value="NC_002737.2"/>
</dbReference>
<dbReference type="SMR" id="P10520"/>
<dbReference type="BindingDB" id="P10520"/>
<dbReference type="ChEMBL" id="CHEMBL1293228"/>
<dbReference type="DrugCentral" id="P10520"/>
<dbReference type="KEGG" id="spy:SPy_1979"/>
<dbReference type="KEGG" id="spz:M5005_Spy1684"/>
<dbReference type="PATRIC" id="fig|160490.10.peg.1720"/>
<dbReference type="HOGENOM" id="CLU_622418_0_0_9"/>
<dbReference type="OMA" id="QEFTYHV"/>
<dbReference type="PRO" id="PR:P10520"/>
<dbReference type="Proteomes" id="UP000000750">
    <property type="component" value="Chromosome"/>
</dbReference>
<dbReference type="GO" id="GO:0005576">
    <property type="term" value="C:extracellular region"/>
    <property type="evidence" value="ECO:0007669"/>
    <property type="project" value="InterPro"/>
</dbReference>
<dbReference type="GO" id="GO:0035894">
    <property type="term" value="P:induction of platelet aggregation in another organism"/>
    <property type="evidence" value="ECO:0000269"/>
    <property type="project" value="SigSci"/>
</dbReference>
<dbReference type="GO" id="GO:0141145">
    <property type="term" value="P:symbiont-mediated suppression of host neutrophil extracellular trap formation"/>
    <property type="evidence" value="ECO:0000269"/>
    <property type="project" value="SigSci"/>
</dbReference>
<dbReference type="Gene3D" id="3.10.20.150">
    <property type="match status" value="1"/>
</dbReference>
<dbReference type="Gene3D" id="3.10.20.180">
    <property type="match status" value="2"/>
</dbReference>
<dbReference type="InterPro" id="IPR004093">
    <property type="entry name" value="SAK"/>
</dbReference>
<dbReference type="InterPro" id="IPR036120">
    <property type="entry name" value="SAK/SK_sf"/>
</dbReference>
<dbReference type="InterPro" id="IPR008124">
    <property type="entry name" value="SK"/>
</dbReference>
<dbReference type="Pfam" id="PF02821">
    <property type="entry name" value="Staphylokinase"/>
    <property type="match status" value="2"/>
</dbReference>
<dbReference type="PRINTS" id="PR01753">
    <property type="entry name" value="STREPKINASE"/>
</dbReference>
<dbReference type="SUPFAM" id="SSF54328">
    <property type="entry name" value="Staphylokinase/streptokinase"/>
    <property type="match status" value="3"/>
</dbReference>
<feature type="signal peptide">
    <location>
        <begin position="1"/>
        <end position="26"/>
    </location>
</feature>
<feature type="chain" id="PRO_0000022429" description="Streptokinase A">
    <location>
        <begin position="27"/>
        <end position="440"/>
    </location>
</feature>
<feature type="sequence conflict" description="In Ref. 1; CAA31765." evidence="1" ref="1">
    <original>L</original>
    <variation>V</variation>
    <location>
        <position position="163"/>
    </location>
</feature>
<feature type="sequence conflict" description="In Ref. 1; CAA31765." evidence="1" ref="1">
    <original>R</original>
    <variation>G</variation>
    <location>
        <position position="345"/>
    </location>
</feature>
<feature type="sequence conflict" description="In Ref. 1; CAA31765." evidence="1" ref="1">
    <original>D</original>
    <variation>N</variation>
    <location>
        <position position="373"/>
    </location>
</feature>
<feature type="sequence conflict" description="In Ref. 1; CAA31765." evidence="1" ref="1">
    <original>D</original>
    <variation>Y</variation>
    <location>
        <position position="428"/>
    </location>
</feature>
<feature type="sequence conflict" description="In Ref. 1; CAA31765." evidence="1" ref="1">
    <original>K</original>
    <variation>N</variation>
    <location>
        <position position="438"/>
    </location>
</feature>
<reference key="1">
    <citation type="journal article" date="1989" name="Nucleic Acids Res.">
        <title>Nucleotide sequence of the streptokinase gene from a Streptococcus pyogenes type 1 strain.</title>
        <authorList>
            <person name="Walter F."/>
            <person name="Siegel M."/>
            <person name="Malke H."/>
        </authorList>
    </citation>
    <scope>NUCLEOTIDE SEQUENCE [GENOMIC DNA]</scope>
    <source>
        <strain>SF130/13 / Serotype M1</strain>
    </source>
</reference>
<reference key="2">
    <citation type="journal article" date="2001" name="Proc. Natl. Acad. Sci. U.S.A.">
        <title>Complete genome sequence of an M1 strain of Streptococcus pyogenes.</title>
        <authorList>
            <person name="Ferretti J.J."/>
            <person name="McShan W.M."/>
            <person name="Ajdic D.J."/>
            <person name="Savic D.J."/>
            <person name="Savic G."/>
            <person name="Lyon K."/>
            <person name="Primeaux C."/>
            <person name="Sezate S."/>
            <person name="Suvorov A.N."/>
            <person name="Kenton S."/>
            <person name="Lai H.S."/>
            <person name="Lin S.P."/>
            <person name="Qian Y."/>
            <person name="Jia H.G."/>
            <person name="Najar F.Z."/>
            <person name="Ren Q."/>
            <person name="Zhu H."/>
            <person name="Song L."/>
            <person name="White J."/>
            <person name="Yuan X."/>
            <person name="Clifton S.W."/>
            <person name="Roe B.A."/>
            <person name="McLaughlin R.E."/>
        </authorList>
    </citation>
    <scope>NUCLEOTIDE SEQUENCE [LARGE SCALE GENOMIC DNA]</scope>
    <source>
        <strain>ATCC 700294 / SF370 / Serotype M1</strain>
    </source>
</reference>
<reference key="3">
    <citation type="journal article" date="2005" name="J. Infect. Dis.">
        <title>Evolutionary origin and emergence of a highly successful clone of serotype M1 group A Streptococcus involved multiple horizontal gene transfer events.</title>
        <authorList>
            <person name="Sumby P."/>
            <person name="Porcella S.F."/>
            <person name="Madrigal A.G."/>
            <person name="Barbian K.D."/>
            <person name="Virtaneva K."/>
            <person name="Ricklefs S.M."/>
            <person name="Sturdevant D.E."/>
            <person name="Graham M.R."/>
            <person name="Vuopio-Varkila J."/>
            <person name="Hoe N.P."/>
            <person name="Musser J.M."/>
        </authorList>
    </citation>
    <scope>NUCLEOTIDE SEQUENCE [LARGE SCALE GENOMIC DNA]</scope>
    <source>
        <strain>ATCC BAA-947 / MGAS5005 / Serotype M1</strain>
    </source>
</reference>